<keyword id="KW-0028">Amino-acid biosynthesis</keyword>
<keyword id="KW-0368">Histidine biosynthesis</keyword>
<keyword id="KW-0378">Hydrolase</keyword>
<keyword id="KW-0486">Methionine biosynthesis</keyword>
<keyword id="KW-0511">Multifunctional enzyme</keyword>
<keyword id="KW-0521">NADP</keyword>
<keyword id="KW-0554">One-carbon metabolism</keyword>
<keyword id="KW-0560">Oxidoreductase</keyword>
<keyword id="KW-0658">Purine biosynthesis</keyword>
<sequence>MKILDGKAVSLKVKESVKVRADELKKFGVEPTLAVVLVGEDKASQTYVRAKEKACNEYGIKSVAHRLSENTTQNELLALINVLNLDDSIHGILVQLPLPKHIDTNVVLAAIDPRKDVDGFHAVNVGKLVSGLDGFVPCTPLGVMEILKEYGIEVAGLNAVVIGRSNIVGKPMANLLLNASATVTVTHSKTKNLKEICKNADLIVAAIGKPFFLKADMVKDGAVVVDVGINRLDDGRLVGDVDFDEVAPKCSYITPVPGGVGPMTIAMLLNNTILAAQAKIAKN</sequence>
<reference key="1">
    <citation type="submission" date="2007-10" db="EMBL/GenBank/DDBJ databases">
        <title>Genome sequence of Campylobacter concisus 13826 isolated from human feces.</title>
        <authorList>
            <person name="Fouts D.E."/>
            <person name="Mongodin E.F."/>
            <person name="Puiu D."/>
            <person name="Sebastian Y."/>
            <person name="Miller W.G."/>
            <person name="Mandrell R.E."/>
            <person name="On S."/>
            <person name="Nelson K.E."/>
        </authorList>
    </citation>
    <scope>NUCLEOTIDE SEQUENCE [LARGE SCALE GENOMIC DNA]</scope>
    <source>
        <strain>13826</strain>
    </source>
</reference>
<accession>A7ZCH3</accession>
<evidence type="ECO:0000255" key="1">
    <source>
        <dbReference type="HAMAP-Rule" id="MF_01576"/>
    </source>
</evidence>
<name>FOLD_CAMC1</name>
<protein>
    <recommendedName>
        <fullName evidence="1">Bifunctional protein FolD</fullName>
    </recommendedName>
    <domain>
        <recommendedName>
            <fullName evidence="1">Methylenetetrahydrofolate dehydrogenase</fullName>
            <ecNumber evidence="1">1.5.1.5</ecNumber>
        </recommendedName>
    </domain>
    <domain>
        <recommendedName>
            <fullName evidence="1">Methenyltetrahydrofolate cyclohydrolase</fullName>
            <ecNumber evidence="1">3.5.4.9</ecNumber>
        </recommendedName>
    </domain>
</protein>
<organism>
    <name type="scientific">Campylobacter concisus (strain 13826)</name>
    <dbReference type="NCBI Taxonomy" id="360104"/>
    <lineage>
        <taxon>Bacteria</taxon>
        <taxon>Pseudomonadati</taxon>
        <taxon>Campylobacterota</taxon>
        <taxon>Epsilonproteobacteria</taxon>
        <taxon>Campylobacterales</taxon>
        <taxon>Campylobacteraceae</taxon>
        <taxon>Campylobacter</taxon>
    </lineage>
</organism>
<comment type="function">
    <text evidence="1">Catalyzes the oxidation of 5,10-methylenetetrahydrofolate to 5,10-methenyltetrahydrofolate and then the hydrolysis of 5,10-methenyltetrahydrofolate to 10-formyltetrahydrofolate.</text>
</comment>
<comment type="catalytic activity">
    <reaction evidence="1">
        <text>(6R)-5,10-methylene-5,6,7,8-tetrahydrofolate + NADP(+) = (6R)-5,10-methenyltetrahydrofolate + NADPH</text>
        <dbReference type="Rhea" id="RHEA:22812"/>
        <dbReference type="ChEBI" id="CHEBI:15636"/>
        <dbReference type="ChEBI" id="CHEBI:57455"/>
        <dbReference type="ChEBI" id="CHEBI:57783"/>
        <dbReference type="ChEBI" id="CHEBI:58349"/>
        <dbReference type="EC" id="1.5.1.5"/>
    </reaction>
</comment>
<comment type="catalytic activity">
    <reaction evidence="1">
        <text>(6R)-5,10-methenyltetrahydrofolate + H2O = (6R)-10-formyltetrahydrofolate + H(+)</text>
        <dbReference type="Rhea" id="RHEA:23700"/>
        <dbReference type="ChEBI" id="CHEBI:15377"/>
        <dbReference type="ChEBI" id="CHEBI:15378"/>
        <dbReference type="ChEBI" id="CHEBI:57455"/>
        <dbReference type="ChEBI" id="CHEBI:195366"/>
        <dbReference type="EC" id="3.5.4.9"/>
    </reaction>
</comment>
<comment type="pathway">
    <text evidence="1">One-carbon metabolism; tetrahydrofolate interconversion.</text>
</comment>
<comment type="subunit">
    <text evidence="1">Homodimer.</text>
</comment>
<comment type="similarity">
    <text evidence="1">Belongs to the tetrahydrofolate dehydrogenase/cyclohydrolase family.</text>
</comment>
<proteinExistence type="inferred from homology"/>
<dbReference type="EC" id="1.5.1.5" evidence="1"/>
<dbReference type="EC" id="3.5.4.9" evidence="1"/>
<dbReference type="EMBL" id="CP000792">
    <property type="protein sequence ID" value="EAT97990.1"/>
    <property type="molecule type" value="Genomic_DNA"/>
</dbReference>
<dbReference type="RefSeq" id="WP_012001452.1">
    <property type="nucleotide sequence ID" value="NC_009802.2"/>
</dbReference>
<dbReference type="SMR" id="A7ZCH3"/>
<dbReference type="STRING" id="360104.CCC13826_0832"/>
<dbReference type="KEGG" id="cco:CCC13826_0832"/>
<dbReference type="eggNOG" id="COG0190">
    <property type="taxonomic scope" value="Bacteria"/>
</dbReference>
<dbReference type="HOGENOM" id="CLU_034045_2_1_7"/>
<dbReference type="OrthoDB" id="9803580at2"/>
<dbReference type="UniPathway" id="UPA00193"/>
<dbReference type="Proteomes" id="UP000001121">
    <property type="component" value="Chromosome"/>
</dbReference>
<dbReference type="GO" id="GO:0005829">
    <property type="term" value="C:cytosol"/>
    <property type="evidence" value="ECO:0007669"/>
    <property type="project" value="TreeGrafter"/>
</dbReference>
<dbReference type="GO" id="GO:0004477">
    <property type="term" value="F:methenyltetrahydrofolate cyclohydrolase activity"/>
    <property type="evidence" value="ECO:0007669"/>
    <property type="project" value="UniProtKB-UniRule"/>
</dbReference>
<dbReference type="GO" id="GO:0004488">
    <property type="term" value="F:methylenetetrahydrofolate dehydrogenase (NADP+) activity"/>
    <property type="evidence" value="ECO:0007669"/>
    <property type="project" value="UniProtKB-UniRule"/>
</dbReference>
<dbReference type="GO" id="GO:0000105">
    <property type="term" value="P:L-histidine biosynthetic process"/>
    <property type="evidence" value="ECO:0007669"/>
    <property type="project" value="UniProtKB-KW"/>
</dbReference>
<dbReference type="GO" id="GO:0009086">
    <property type="term" value="P:methionine biosynthetic process"/>
    <property type="evidence" value="ECO:0007669"/>
    <property type="project" value="UniProtKB-KW"/>
</dbReference>
<dbReference type="GO" id="GO:0006164">
    <property type="term" value="P:purine nucleotide biosynthetic process"/>
    <property type="evidence" value="ECO:0007669"/>
    <property type="project" value="UniProtKB-KW"/>
</dbReference>
<dbReference type="GO" id="GO:0035999">
    <property type="term" value="P:tetrahydrofolate interconversion"/>
    <property type="evidence" value="ECO:0007669"/>
    <property type="project" value="UniProtKB-UniRule"/>
</dbReference>
<dbReference type="CDD" id="cd01080">
    <property type="entry name" value="NAD_bind_m-THF_DH_Cyclohyd"/>
    <property type="match status" value="1"/>
</dbReference>
<dbReference type="FunFam" id="3.40.50.720:FF:000094">
    <property type="entry name" value="Bifunctional protein FolD"/>
    <property type="match status" value="1"/>
</dbReference>
<dbReference type="FunFam" id="3.40.50.10860:FF:000005">
    <property type="entry name" value="C-1-tetrahydrofolate synthase, cytoplasmic, putative"/>
    <property type="match status" value="1"/>
</dbReference>
<dbReference type="Gene3D" id="3.40.50.10860">
    <property type="entry name" value="Leucine Dehydrogenase, chain A, domain 1"/>
    <property type="match status" value="1"/>
</dbReference>
<dbReference type="Gene3D" id="3.40.50.720">
    <property type="entry name" value="NAD(P)-binding Rossmann-like Domain"/>
    <property type="match status" value="1"/>
</dbReference>
<dbReference type="HAMAP" id="MF_01576">
    <property type="entry name" value="THF_DHG_CYH"/>
    <property type="match status" value="1"/>
</dbReference>
<dbReference type="InterPro" id="IPR046346">
    <property type="entry name" value="Aminoacid_DH-like_N_sf"/>
</dbReference>
<dbReference type="InterPro" id="IPR036291">
    <property type="entry name" value="NAD(P)-bd_dom_sf"/>
</dbReference>
<dbReference type="InterPro" id="IPR000672">
    <property type="entry name" value="THF_DH/CycHdrlase"/>
</dbReference>
<dbReference type="InterPro" id="IPR020630">
    <property type="entry name" value="THF_DH/CycHdrlase_cat_dom"/>
</dbReference>
<dbReference type="InterPro" id="IPR020867">
    <property type="entry name" value="THF_DH/CycHdrlase_CS"/>
</dbReference>
<dbReference type="InterPro" id="IPR020631">
    <property type="entry name" value="THF_DH/CycHdrlase_NAD-bd_dom"/>
</dbReference>
<dbReference type="NCBIfam" id="NF008058">
    <property type="entry name" value="PRK10792.1"/>
    <property type="match status" value="1"/>
</dbReference>
<dbReference type="NCBIfam" id="NF010783">
    <property type="entry name" value="PRK14186.1"/>
    <property type="match status" value="1"/>
</dbReference>
<dbReference type="NCBIfam" id="NF010787">
    <property type="entry name" value="PRK14191.1"/>
    <property type="match status" value="1"/>
</dbReference>
<dbReference type="PANTHER" id="PTHR48099:SF5">
    <property type="entry name" value="C-1-TETRAHYDROFOLATE SYNTHASE, CYTOPLASMIC"/>
    <property type="match status" value="1"/>
</dbReference>
<dbReference type="PANTHER" id="PTHR48099">
    <property type="entry name" value="C-1-TETRAHYDROFOLATE SYNTHASE, CYTOPLASMIC-RELATED"/>
    <property type="match status" value="1"/>
</dbReference>
<dbReference type="Pfam" id="PF00763">
    <property type="entry name" value="THF_DHG_CYH"/>
    <property type="match status" value="1"/>
</dbReference>
<dbReference type="Pfam" id="PF02882">
    <property type="entry name" value="THF_DHG_CYH_C"/>
    <property type="match status" value="1"/>
</dbReference>
<dbReference type="PRINTS" id="PR00085">
    <property type="entry name" value="THFDHDRGNASE"/>
</dbReference>
<dbReference type="SUPFAM" id="SSF53223">
    <property type="entry name" value="Aminoacid dehydrogenase-like, N-terminal domain"/>
    <property type="match status" value="1"/>
</dbReference>
<dbReference type="SUPFAM" id="SSF51735">
    <property type="entry name" value="NAD(P)-binding Rossmann-fold domains"/>
    <property type="match status" value="1"/>
</dbReference>
<dbReference type="PROSITE" id="PS00766">
    <property type="entry name" value="THF_DHG_CYH_1"/>
    <property type="match status" value="1"/>
</dbReference>
<dbReference type="PROSITE" id="PS00767">
    <property type="entry name" value="THF_DHG_CYH_2"/>
    <property type="match status" value="1"/>
</dbReference>
<gene>
    <name evidence="1" type="primary">folD</name>
    <name type="ordered locus">Ccon26_05930</name>
    <name type="ORF">CCC13826_0832</name>
</gene>
<feature type="chain" id="PRO_1000073606" description="Bifunctional protein FolD">
    <location>
        <begin position="1"/>
        <end position="283"/>
    </location>
</feature>
<feature type="binding site" evidence="1">
    <location>
        <begin position="163"/>
        <end position="165"/>
    </location>
    <ligand>
        <name>NADP(+)</name>
        <dbReference type="ChEBI" id="CHEBI:58349"/>
    </ligand>
</feature>
<feature type="binding site" evidence="1">
    <location>
        <position position="188"/>
    </location>
    <ligand>
        <name>NADP(+)</name>
        <dbReference type="ChEBI" id="CHEBI:58349"/>
    </ligand>
</feature>
<feature type="binding site" evidence="1">
    <location>
        <position position="229"/>
    </location>
    <ligand>
        <name>NADP(+)</name>
        <dbReference type="ChEBI" id="CHEBI:58349"/>
    </ligand>
</feature>